<accession>Q7MYG1</accession>
<protein>
    <recommendedName>
        <fullName evidence="1">Large ribosomal subunit protein uL14</fullName>
    </recommendedName>
    <alternativeName>
        <fullName evidence="2">50S ribosomal protein L14</fullName>
    </alternativeName>
</protein>
<proteinExistence type="inferred from homology"/>
<name>RL14_PHOLL</name>
<organism>
    <name type="scientific">Photorhabdus laumondii subsp. laumondii (strain DSM 15139 / CIP 105565 / TT01)</name>
    <name type="common">Photorhabdus luminescens subsp. laumondii</name>
    <dbReference type="NCBI Taxonomy" id="243265"/>
    <lineage>
        <taxon>Bacteria</taxon>
        <taxon>Pseudomonadati</taxon>
        <taxon>Pseudomonadota</taxon>
        <taxon>Gammaproteobacteria</taxon>
        <taxon>Enterobacterales</taxon>
        <taxon>Morganellaceae</taxon>
        <taxon>Photorhabdus</taxon>
    </lineage>
</organism>
<reference key="1">
    <citation type="journal article" date="2003" name="Nat. Biotechnol.">
        <title>The genome sequence of the entomopathogenic bacterium Photorhabdus luminescens.</title>
        <authorList>
            <person name="Duchaud E."/>
            <person name="Rusniok C."/>
            <person name="Frangeul L."/>
            <person name="Buchrieser C."/>
            <person name="Givaudan A."/>
            <person name="Taourit S."/>
            <person name="Bocs S."/>
            <person name="Boursaux-Eude C."/>
            <person name="Chandler M."/>
            <person name="Charles J.-F."/>
            <person name="Dassa E."/>
            <person name="Derose R."/>
            <person name="Derzelle S."/>
            <person name="Freyssinet G."/>
            <person name="Gaudriault S."/>
            <person name="Medigue C."/>
            <person name="Lanois A."/>
            <person name="Powell K."/>
            <person name="Siguier P."/>
            <person name="Vincent R."/>
            <person name="Wingate V."/>
            <person name="Zouine M."/>
            <person name="Glaser P."/>
            <person name="Boemare N."/>
            <person name="Danchin A."/>
            <person name="Kunst F."/>
        </authorList>
    </citation>
    <scope>NUCLEOTIDE SEQUENCE [LARGE SCALE GENOMIC DNA]</scope>
    <source>
        <strain>DSM 15139 / CIP 105565 / TT01</strain>
    </source>
</reference>
<comment type="function">
    <text evidence="1">Binds to 23S rRNA. Forms part of two intersubunit bridges in the 70S ribosome.</text>
</comment>
<comment type="subunit">
    <text evidence="1">Part of the 50S ribosomal subunit. Forms a cluster with proteins L3 and L19. In the 70S ribosome, L14 and L19 interact and together make contacts with the 16S rRNA in bridges B5 and B8.</text>
</comment>
<comment type="similarity">
    <text evidence="1">Belongs to the universal ribosomal protein uL14 family.</text>
</comment>
<feature type="chain" id="PRO_0000266519" description="Large ribosomal subunit protein uL14">
    <location>
        <begin position="1"/>
        <end position="123"/>
    </location>
</feature>
<keyword id="KW-1185">Reference proteome</keyword>
<keyword id="KW-0687">Ribonucleoprotein</keyword>
<keyword id="KW-0689">Ribosomal protein</keyword>
<keyword id="KW-0694">RNA-binding</keyword>
<keyword id="KW-0699">rRNA-binding</keyword>
<evidence type="ECO:0000255" key="1">
    <source>
        <dbReference type="HAMAP-Rule" id="MF_01367"/>
    </source>
</evidence>
<evidence type="ECO:0000305" key="2"/>
<gene>
    <name evidence="1" type="primary">rplN</name>
    <name type="ordered locus">plu4716</name>
</gene>
<sequence length="123" mass="13651">MIQEQTMLNVADNSGARRVMCIKVLGGSHRRYAHVGDIIKVTIKEAIPRGKVKKGDVLKAVVVRTRKGVRRPDGSVIRFDGNACVLLNNTSEQVIGTRIFGPVTRELRNEKFMKIISLAPEVL</sequence>
<dbReference type="EMBL" id="BX571874">
    <property type="protein sequence ID" value="CAE17088.1"/>
    <property type="molecule type" value="Genomic_DNA"/>
</dbReference>
<dbReference type="RefSeq" id="WP_011148785.1">
    <property type="nucleotide sequence ID" value="NC_005126.1"/>
</dbReference>
<dbReference type="SMR" id="Q7MYG1"/>
<dbReference type="STRING" id="243265.plu4716"/>
<dbReference type="GeneID" id="48850941"/>
<dbReference type="KEGG" id="plu:plu4716"/>
<dbReference type="eggNOG" id="COG0093">
    <property type="taxonomic scope" value="Bacteria"/>
</dbReference>
<dbReference type="HOGENOM" id="CLU_095071_2_1_6"/>
<dbReference type="OrthoDB" id="9806379at2"/>
<dbReference type="Proteomes" id="UP000002514">
    <property type="component" value="Chromosome"/>
</dbReference>
<dbReference type="GO" id="GO:0022625">
    <property type="term" value="C:cytosolic large ribosomal subunit"/>
    <property type="evidence" value="ECO:0007669"/>
    <property type="project" value="TreeGrafter"/>
</dbReference>
<dbReference type="GO" id="GO:0070180">
    <property type="term" value="F:large ribosomal subunit rRNA binding"/>
    <property type="evidence" value="ECO:0007669"/>
    <property type="project" value="TreeGrafter"/>
</dbReference>
<dbReference type="GO" id="GO:0003735">
    <property type="term" value="F:structural constituent of ribosome"/>
    <property type="evidence" value="ECO:0007669"/>
    <property type="project" value="InterPro"/>
</dbReference>
<dbReference type="GO" id="GO:0006412">
    <property type="term" value="P:translation"/>
    <property type="evidence" value="ECO:0007669"/>
    <property type="project" value="UniProtKB-UniRule"/>
</dbReference>
<dbReference type="CDD" id="cd00337">
    <property type="entry name" value="Ribosomal_uL14"/>
    <property type="match status" value="1"/>
</dbReference>
<dbReference type="FunFam" id="2.40.150.20:FF:000001">
    <property type="entry name" value="50S ribosomal protein L14"/>
    <property type="match status" value="1"/>
</dbReference>
<dbReference type="Gene3D" id="2.40.150.20">
    <property type="entry name" value="Ribosomal protein L14"/>
    <property type="match status" value="1"/>
</dbReference>
<dbReference type="HAMAP" id="MF_01367">
    <property type="entry name" value="Ribosomal_uL14"/>
    <property type="match status" value="1"/>
</dbReference>
<dbReference type="InterPro" id="IPR000218">
    <property type="entry name" value="Ribosomal_uL14"/>
</dbReference>
<dbReference type="InterPro" id="IPR005745">
    <property type="entry name" value="Ribosomal_uL14_bac-type"/>
</dbReference>
<dbReference type="InterPro" id="IPR019972">
    <property type="entry name" value="Ribosomal_uL14_CS"/>
</dbReference>
<dbReference type="InterPro" id="IPR036853">
    <property type="entry name" value="Ribosomal_uL14_sf"/>
</dbReference>
<dbReference type="NCBIfam" id="TIGR01067">
    <property type="entry name" value="rplN_bact"/>
    <property type="match status" value="1"/>
</dbReference>
<dbReference type="PANTHER" id="PTHR11761">
    <property type="entry name" value="50S/60S RIBOSOMAL PROTEIN L14/L23"/>
    <property type="match status" value="1"/>
</dbReference>
<dbReference type="PANTHER" id="PTHR11761:SF3">
    <property type="entry name" value="LARGE RIBOSOMAL SUBUNIT PROTEIN UL14M"/>
    <property type="match status" value="1"/>
</dbReference>
<dbReference type="Pfam" id="PF00238">
    <property type="entry name" value="Ribosomal_L14"/>
    <property type="match status" value="1"/>
</dbReference>
<dbReference type="SMART" id="SM01374">
    <property type="entry name" value="Ribosomal_L14"/>
    <property type="match status" value="1"/>
</dbReference>
<dbReference type="SUPFAM" id="SSF50193">
    <property type="entry name" value="Ribosomal protein L14"/>
    <property type="match status" value="1"/>
</dbReference>
<dbReference type="PROSITE" id="PS00049">
    <property type="entry name" value="RIBOSOMAL_L14"/>
    <property type="match status" value="1"/>
</dbReference>